<accession>Q660G9</accession>
<dbReference type="EMBL" id="CP000013">
    <property type="protein sequence ID" value="AAU07552.1"/>
    <property type="molecule type" value="Genomic_DNA"/>
</dbReference>
<dbReference type="RefSeq" id="WP_002557290.1">
    <property type="nucleotide sequence ID" value="NZ_CP028872.1"/>
</dbReference>
<dbReference type="SMR" id="Q660G9"/>
<dbReference type="GeneID" id="83866182"/>
<dbReference type="KEGG" id="bga:BG0725"/>
<dbReference type="eggNOG" id="COG0333">
    <property type="taxonomic scope" value="Bacteria"/>
</dbReference>
<dbReference type="HOGENOM" id="CLU_129084_1_0_12"/>
<dbReference type="OrthoDB" id="9812874at2"/>
<dbReference type="Proteomes" id="UP000002276">
    <property type="component" value="Chromosome"/>
</dbReference>
<dbReference type="GO" id="GO:0015934">
    <property type="term" value="C:large ribosomal subunit"/>
    <property type="evidence" value="ECO:0007669"/>
    <property type="project" value="InterPro"/>
</dbReference>
<dbReference type="GO" id="GO:0003735">
    <property type="term" value="F:structural constituent of ribosome"/>
    <property type="evidence" value="ECO:0007669"/>
    <property type="project" value="InterPro"/>
</dbReference>
<dbReference type="GO" id="GO:0006412">
    <property type="term" value="P:translation"/>
    <property type="evidence" value="ECO:0007669"/>
    <property type="project" value="UniProtKB-UniRule"/>
</dbReference>
<dbReference type="HAMAP" id="MF_00340">
    <property type="entry name" value="Ribosomal_bL32"/>
    <property type="match status" value="1"/>
</dbReference>
<dbReference type="InterPro" id="IPR002677">
    <property type="entry name" value="Ribosomal_bL32"/>
</dbReference>
<dbReference type="InterPro" id="IPR044957">
    <property type="entry name" value="Ribosomal_bL32_bact"/>
</dbReference>
<dbReference type="InterPro" id="IPR011332">
    <property type="entry name" value="Ribosomal_zn-bd"/>
</dbReference>
<dbReference type="NCBIfam" id="TIGR01031">
    <property type="entry name" value="rpmF_bact"/>
    <property type="match status" value="1"/>
</dbReference>
<dbReference type="PANTHER" id="PTHR35534">
    <property type="entry name" value="50S RIBOSOMAL PROTEIN L32"/>
    <property type="match status" value="1"/>
</dbReference>
<dbReference type="PANTHER" id="PTHR35534:SF1">
    <property type="entry name" value="LARGE RIBOSOMAL SUBUNIT PROTEIN BL32"/>
    <property type="match status" value="1"/>
</dbReference>
<dbReference type="Pfam" id="PF01783">
    <property type="entry name" value="Ribosomal_L32p"/>
    <property type="match status" value="1"/>
</dbReference>
<dbReference type="SUPFAM" id="SSF57829">
    <property type="entry name" value="Zn-binding ribosomal proteins"/>
    <property type="match status" value="1"/>
</dbReference>
<organism>
    <name type="scientific">Borrelia garinii subsp. bavariensis (strain ATCC BAA-2496 / DSM 23469 / PBi)</name>
    <name type="common">Borreliella bavariensis</name>
    <dbReference type="NCBI Taxonomy" id="290434"/>
    <lineage>
        <taxon>Bacteria</taxon>
        <taxon>Pseudomonadati</taxon>
        <taxon>Spirochaetota</taxon>
        <taxon>Spirochaetia</taxon>
        <taxon>Spirochaetales</taxon>
        <taxon>Borreliaceae</taxon>
        <taxon>Borreliella</taxon>
    </lineage>
</organism>
<protein>
    <recommendedName>
        <fullName evidence="1">Large ribosomal subunit protein bL32</fullName>
    </recommendedName>
    <alternativeName>
        <fullName evidence="2">50S ribosomal protein L32</fullName>
    </alternativeName>
</protein>
<keyword id="KW-0687">Ribonucleoprotein</keyword>
<keyword id="KW-0689">Ribosomal protein</keyword>
<gene>
    <name evidence="1" type="primary">rpmF</name>
    <name type="ordered locus">BG0725</name>
</gene>
<sequence length="60" mass="7076">MAVPKFKPSKSRSRTRRSINMRKKIPQFQECSNCGNLGVRHRICLKCGYYRNNQYLEIGL</sequence>
<feature type="chain" id="PRO_0000225706" description="Large ribosomal subunit protein bL32">
    <location>
        <begin position="1"/>
        <end position="60"/>
    </location>
</feature>
<name>RL32_BORGP</name>
<proteinExistence type="inferred from homology"/>
<reference key="1">
    <citation type="journal article" date="2004" name="Nucleic Acids Res.">
        <title>Comparative analysis of the Borrelia garinii genome.</title>
        <authorList>
            <person name="Gloeckner G."/>
            <person name="Lehmann R."/>
            <person name="Romualdi A."/>
            <person name="Pradella S."/>
            <person name="Schulte-Spechtel U."/>
            <person name="Schilhabel M."/>
            <person name="Wilske B."/>
            <person name="Suehnel J."/>
            <person name="Platzer M."/>
        </authorList>
    </citation>
    <scope>NUCLEOTIDE SEQUENCE [LARGE SCALE GENOMIC DNA]</scope>
    <source>
        <strain>ATCC BAA-2496 / DSM 23469 / PBi</strain>
    </source>
</reference>
<evidence type="ECO:0000255" key="1">
    <source>
        <dbReference type="HAMAP-Rule" id="MF_00340"/>
    </source>
</evidence>
<evidence type="ECO:0000305" key="2"/>
<comment type="similarity">
    <text evidence="1">Belongs to the bacterial ribosomal protein bL32 family.</text>
</comment>